<protein>
    <recommendedName>
        <fullName evidence="1">Small ribosomal subunit protein uS11</fullName>
    </recommendedName>
    <alternativeName>
        <fullName evidence="2">30S ribosomal protein S11</fullName>
    </alternativeName>
</protein>
<accession>A9R916</accession>
<reference key="1">
    <citation type="journal article" date="2010" name="J. Bacteriol.">
        <title>Genome sequence of the deep-rooted Yersinia pestis strain Angola reveals new insights into the evolution and pangenome of the plague bacterium.</title>
        <authorList>
            <person name="Eppinger M."/>
            <person name="Worsham P.L."/>
            <person name="Nikolich M.P."/>
            <person name="Riley D.R."/>
            <person name="Sebastian Y."/>
            <person name="Mou S."/>
            <person name="Achtman M."/>
            <person name="Lindler L.E."/>
            <person name="Ravel J."/>
        </authorList>
    </citation>
    <scope>NUCLEOTIDE SEQUENCE [LARGE SCALE GENOMIC DNA]</scope>
    <source>
        <strain>Angola</strain>
    </source>
</reference>
<comment type="function">
    <text evidence="1">Located on the platform of the 30S subunit, it bridges several disparate RNA helices of the 16S rRNA. Forms part of the Shine-Dalgarno cleft in the 70S ribosome.</text>
</comment>
<comment type="subunit">
    <text evidence="1">Part of the 30S ribosomal subunit. Interacts with proteins S7 and S18. Binds to IF-3.</text>
</comment>
<comment type="similarity">
    <text evidence="1">Belongs to the universal ribosomal protein uS11 family.</text>
</comment>
<proteinExistence type="inferred from homology"/>
<name>RS11_YERPG</name>
<gene>
    <name evidence="1" type="primary">rpsK</name>
    <name type="ordered locus">YpAngola_A0604</name>
</gene>
<evidence type="ECO:0000255" key="1">
    <source>
        <dbReference type="HAMAP-Rule" id="MF_01310"/>
    </source>
</evidence>
<evidence type="ECO:0000305" key="2"/>
<feature type="chain" id="PRO_1000141164" description="Small ribosomal subunit protein uS11">
    <location>
        <begin position="1"/>
        <end position="129"/>
    </location>
</feature>
<keyword id="KW-0687">Ribonucleoprotein</keyword>
<keyword id="KW-0689">Ribosomal protein</keyword>
<keyword id="KW-0694">RNA-binding</keyword>
<keyword id="KW-0699">rRNA-binding</keyword>
<dbReference type="EMBL" id="CP000901">
    <property type="protein sequence ID" value="ABX85211.1"/>
    <property type="molecule type" value="Genomic_DNA"/>
</dbReference>
<dbReference type="RefSeq" id="WP_002218948.1">
    <property type="nucleotide sequence ID" value="NZ_CP009935.1"/>
</dbReference>
<dbReference type="SMR" id="A9R916"/>
<dbReference type="GeneID" id="96663173"/>
<dbReference type="KEGG" id="ypg:YpAngola_A0604"/>
<dbReference type="PATRIC" id="fig|349746.12.peg.1556"/>
<dbReference type="GO" id="GO:1990904">
    <property type="term" value="C:ribonucleoprotein complex"/>
    <property type="evidence" value="ECO:0007669"/>
    <property type="project" value="UniProtKB-KW"/>
</dbReference>
<dbReference type="GO" id="GO:0005840">
    <property type="term" value="C:ribosome"/>
    <property type="evidence" value="ECO:0007669"/>
    <property type="project" value="UniProtKB-KW"/>
</dbReference>
<dbReference type="GO" id="GO:0019843">
    <property type="term" value="F:rRNA binding"/>
    <property type="evidence" value="ECO:0007669"/>
    <property type="project" value="UniProtKB-UniRule"/>
</dbReference>
<dbReference type="GO" id="GO:0003735">
    <property type="term" value="F:structural constituent of ribosome"/>
    <property type="evidence" value="ECO:0007669"/>
    <property type="project" value="InterPro"/>
</dbReference>
<dbReference type="GO" id="GO:0006412">
    <property type="term" value="P:translation"/>
    <property type="evidence" value="ECO:0007669"/>
    <property type="project" value="UniProtKB-UniRule"/>
</dbReference>
<dbReference type="FunFam" id="3.30.420.80:FF:000001">
    <property type="entry name" value="30S ribosomal protein S11"/>
    <property type="match status" value="1"/>
</dbReference>
<dbReference type="Gene3D" id="3.30.420.80">
    <property type="entry name" value="Ribosomal protein S11"/>
    <property type="match status" value="1"/>
</dbReference>
<dbReference type="HAMAP" id="MF_01310">
    <property type="entry name" value="Ribosomal_uS11"/>
    <property type="match status" value="1"/>
</dbReference>
<dbReference type="InterPro" id="IPR001971">
    <property type="entry name" value="Ribosomal_uS11"/>
</dbReference>
<dbReference type="InterPro" id="IPR019981">
    <property type="entry name" value="Ribosomal_uS11_bac-type"/>
</dbReference>
<dbReference type="InterPro" id="IPR018102">
    <property type="entry name" value="Ribosomal_uS11_CS"/>
</dbReference>
<dbReference type="InterPro" id="IPR036967">
    <property type="entry name" value="Ribosomal_uS11_sf"/>
</dbReference>
<dbReference type="NCBIfam" id="NF003698">
    <property type="entry name" value="PRK05309.1"/>
    <property type="match status" value="1"/>
</dbReference>
<dbReference type="NCBIfam" id="TIGR03632">
    <property type="entry name" value="uS11_bact"/>
    <property type="match status" value="1"/>
</dbReference>
<dbReference type="PANTHER" id="PTHR11759">
    <property type="entry name" value="40S RIBOSOMAL PROTEIN S14/30S RIBOSOMAL PROTEIN S11"/>
    <property type="match status" value="1"/>
</dbReference>
<dbReference type="Pfam" id="PF00411">
    <property type="entry name" value="Ribosomal_S11"/>
    <property type="match status" value="1"/>
</dbReference>
<dbReference type="PIRSF" id="PIRSF002131">
    <property type="entry name" value="Ribosomal_S11"/>
    <property type="match status" value="1"/>
</dbReference>
<dbReference type="SUPFAM" id="SSF53137">
    <property type="entry name" value="Translational machinery components"/>
    <property type="match status" value="1"/>
</dbReference>
<dbReference type="PROSITE" id="PS00054">
    <property type="entry name" value="RIBOSOMAL_S11"/>
    <property type="match status" value="1"/>
</dbReference>
<organism>
    <name type="scientific">Yersinia pestis bv. Antiqua (strain Angola)</name>
    <dbReference type="NCBI Taxonomy" id="349746"/>
    <lineage>
        <taxon>Bacteria</taxon>
        <taxon>Pseudomonadati</taxon>
        <taxon>Pseudomonadota</taxon>
        <taxon>Gammaproteobacteria</taxon>
        <taxon>Enterobacterales</taxon>
        <taxon>Yersiniaceae</taxon>
        <taxon>Yersinia</taxon>
    </lineage>
</organism>
<sequence length="129" mass="13832">MAKAPIRARKRVRKTVSDGVAHIHASFNNTIVTITDRQGNALGWATAGGSGFRGSRKSTPFAAQVAAERCAEAVKEYGIKNLEVMVKGPGPGRESTIRALNAAGFRITNITDVTPIPHNGCRPPKKRRV</sequence>